<organism>
    <name type="scientific">Mus musculus</name>
    <name type="common">Mouse</name>
    <dbReference type="NCBI Taxonomy" id="10090"/>
    <lineage>
        <taxon>Eukaryota</taxon>
        <taxon>Metazoa</taxon>
        <taxon>Chordata</taxon>
        <taxon>Craniata</taxon>
        <taxon>Vertebrata</taxon>
        <taxon>Euteleostomi</taxon>
        <taxon>Mammalia</taxon>
        <taxon>Eutheria</taxon>
        <taxon>Euarchontoglires</taxon>
        <taxon>Glires</taxon>
        <taxon>Rodentia</taxon>
        <taxon>Myomorpha</taxon>
        <taxon>Muroidea</taxon>
        <taxon>Muridae</taxon>
        <taxon>Murinae</taxon>
        <taxon>Mus</taxon>
        <taxon>Mus</taxon>
    </lineage>
</organism>
<name>FKBP3_MOUSE</name>
<sequence length="224" mass="25148">MAAAVPQRAWTVEQLRSEQLPKKDIIKFLQDHGSDSFLAEHKLLGNIKNVAKTANKDHLVNAYNHLFESKRFKGTETISKVSEQVKNVKLSDDKPKDSKSEETLDEGPPKYTKSILKKGDKTNFPKKGDVVHCWYTGTLPDGTVFDTNIQTSSKKKKNAKPLSFKVGVGKVIRGWDEALLTMSKGEKARLEIEPEWAYGKKGQPDAKIPPNTKLIFEVELVDID</sequence>
<accession>Q62446</accession>
<accession>Q9WTJ7</accession>
<feature type="initiator methionine" description="Removed" evidence="2">
    <location>
        <position position="1"/>
    </location>
</feature>
<feature type="chain" id="PRO_0000075308" description="Peptidyl-prolyl cis-trans isomerase FKBP3">
    <location>
        <begin position="2"/>
        <end position="224"/>
    </location>
</feature>
<feature type="domain" description="PPIase FKBP-type" evidence="3">
    <location>
        <begin position="128"/>
        <end position="224"/>
    </location>
</feature>
<feature type="region of interest" description="Disordered" evidence="4">
    <location>
        <begin position="88"/>
        <end position="118"/>
    </location>
</feature>
<feature type="compositionally biased region" description="Basic and acidic residues" evidence="4">
    <location>
        <begin position="89"/>
        <end position="102"/>
    </location>
</feature>
<feature type="modified residue" description="N-acetylalanine" evidence="2">
    <location>
        <position position="2"/>
    </location>
</feature>
<feature type="modified residue" description="Phosphoserine" evidence="2">
    <location>
        <position position="36"/>
    </location>
</feature>
<feature type="modified residue" description="N6-acetyllysine" evidence="6">
    <location>
        <position position="99"/>
    </location>
</feature>
<feature type="modified residue" description="Phosphoserine" evidence="2">
    <location>
        <position position="152"/>
    </location>
</feature>
<feature type="modified residue" description="N6-acetyllysine" evidence="2">
    <location>
        <position position="170"/>
    </location>
</feature>
<feature type="sequence conflict" description="In Ref. 5; AAB05769." evidence="5" ref="5">
    <original>E</original>
    <variation>G</variation>
    <location>
        <position position="219"/>
    </location>
</feature>
<feature type="strand" evidence="7">
    <location>
        <begin position="110"/>
        <end position="117"/>
    </location>
</feature>
<feature type="strand" evidence="7">
    <location>
        <begin position="130"/>
        <end position="138"/>
    </location>
</feature>
<feature type="strand" evidence="7">
    <location>
        <begin position="144"/>
        <end position="147"/>
    </location>
</feature>
<feature type="strand" evidence="7">
    <location>
        <begin position="152"/>
        <end position="154"/>
    </location>
</feature>
<feature type="turn" evidence="7">
    <location>
        <begin position="155"/>
        <end position="158"/>
    </location>
</feature>
<feature type="strand" evidence="7">
    <location>
        <begin position="162"/>
        <end position="165"/>
    </location>
</feature>
<feature type="strand" evidence="7">
    <location>
        <begin position="168"/>
        <end position="171"/>
    </location>
</feature>
<feature type="helix" evidence="7">
    <location>
        <begin position="173"/>
        <end position="179"/>
    </location>
</feature>
<feature type="strand" evidence="7">
    <location>
        <begin position="187"/>
        <end position="192"/>
    </location>
</feature>
<feature type="helix" evidence="7">
    <location>
        <begin position="194"/>
        <end position="196"/>
    </location>
</feature>
<feature type="helix" evidence="7">
    <location>
        <begin position="204"/>
        <end position="206"/>
    </location>
</feature>
<feature type="strand" evidence="7">
    <location>
        <begin position="214"/>
        <end position="224"/>
    </location>
</feature>
<reference key="1">
    <citation type="submission" date="1999-03" db="EMBL/GenBank/DDBJ databases">
        <title>Isolation and mapping assignment of cDNAs differentially expressed in embryonic telencephalon.</title>
        <authorList>
            <person name="Mas C."/>
            <person name="Bourgeois F."/>
            <person name="Simonneau M."/>
        </authorList>
    </citation>
    <scope>NUCLEOTIDE SEQUENCE [MRNA]</scope>
    <source>
        <tissue>Telencephalon</tissue>
    </source>
</reference>
<reference key="2">
    <citation type="submission" date="1998-12" db="EMBL/GenBank/DDBJ databases">
        <title>Down-regulation of the Stathmin/Op18 and FKBP25 genes following p53 expression.</title>
        <authorList>
            <person name="Ahn J."/>
            <person name="Kratowicz S."/>
            <person name="Murphy M."/>
            <person name="Wang A."/>
            <person name="Levine A.J."/>
            <person name="George D.L."/>
        </authorList>
    </citation>
    <scope>NUCLEOTIDE SEQUENCE [MRNA]</scope>
</reference>
<reference key="3">
    <citation type="journal article" date="2004" name="Genome Res.">
        <title>The status, quality, and expansion of the NIH full-length cDNA project: the Mammalian Gene Collection (MGC).</title>
        <authorList>
            <consortium name="The MGC Project Team"/>
        </authorList>
    </citation>
    <scope>NUCLEOTIDE SEQUENCE [LARGE SCALE MRNA]</scope>
    <source>
        <strain>Czech II</strain>
        <tissue>Mammary tumor</tissue>
    </source>
</reference>
<reference key="4">
    <citation type="submission" date="2007-04" db="UniProtKB">
        <authorList>
            <person name="Lubec G."/>
            <person name="Kang S.U."/>
        </authorList>
    </citation>
    <scope>PROTEIN SEQUENCE OF 100-110</scope>
    <scope>IDENTIFICATION BY MASS SPECTROMETRY</scope>
    <source>
        <strain>C57BL/6J</strain>
        <tissue>Brain</tissue>
    </source>
</reference>
<reference key="5">
    <citation type="journal article" date="1996" name="Genes Dev.">
        <title>Wild-type p53 negatively regulates the expression of a microtubule-associated protein.</title>
        <authorList>
            <person name="Murphy M."/>
            <person name="Hinman A."/>
            <person name="Levine A.J."/>
        </authorList>
    </citation>
    <scope>NUCLEOTIDE SEQUENCE [MRNA] OF 168-224</scope>
</reference>
<reference key="6">
    <citation type="journal article" date="2010" name="Cell">
        <title>A tissue-specific atlas of mouse protein phosphorylation and expression.</title>
        <authorList>
            <person name="Huttlin E.L."/>
            <person name="Jedrychowski M.P."/>
            <person name="Elias J.E."/>
            <person name="Goswami T."/>
            <person name="Rad R."/>
            <person name="Beausoleil S.A."/>
            <person name="Villen J."/>
            <person name="Haas W."/>
            <person name="Sowa M.E."/>
            <person name="Gygi S.P."/>
        </authorList>
    </citation>
    <scope>IDENTIFICATION BY MASS SPECTROMETRY [LARGE SCALE ANALYSIS]</scope>
    <source>
        <tissue>Brain</tissue>
        <tissue>Brown adipose tissue</tissue>
        <tissue>Heart</tissue>
        <tissue>Kidney</tissue>
        <tissue>Liver</tissue>
        <tissue>Lung</tissue>
        <tissue>Pancreas</tissue>
        <tissue>Spleen</tissue>
        <tissue>Testis</tissue>
    </source>
</reference>
<reference key="7">
    <citation type="journal article" date="2013" name="Mol. Cell">
        <title>SIRT5-mediated lysine desuccinylation impacts diverse metabolic pathways.</title>
        <authorList>
            <person name="Park J."/>
            <person name="Chen Y."/>
            <person name="Tishkoff D.X."/>
            <person name="Peng C."/>
            <person name="Tan M."/>
            <person name="Dai L."/>
            <person name="Xie Z."/>
            <person name="Zhang Y."/>
            <person name="Zwaans B.M."/>
            <person name="Skinner M.E."/>
            <person name="Lombard D.B."/>
            <person name="Zhao Y."/>
        </authorList>
    </citation>
    <scope>ACETYLATION [LARGE SCALE ANALYSIS] AT LYS-99</scope>
    <scope>IDENTIFICATION BY MASS SPECTROMETRY [LARGE SCALE ANALYSIS]</scope>
    <source>
        <tissue>Embryonic fibroblast</tissue>
    </source>
</reference>
<dbReference type="EC" id="5.2.1.8"/>
<dbReference type="EMBL" id="AF135595">
    <property type="protein sequence ID" value="AAD25097.1"/>
    <property type="molecule type" value="mRNA"/>
</dbReference>
<dbReference type="EMBL" id="AF110812">
    <property type="protein sequence ID" value="AAD20598.1"/>
    <property type="molecule type" value="mRNA"/>
</dbReference>
<dbReference type="EMBL" id="BC002122">
    <property type="protein sequence ID" value="AAH02122.1"/>
    <property type="molecule type" value="mRNA"/>
</dbReference>
<dbReference type="EMBL" id="U62545">
    <property type="protein sequence ID" value="AAB05769.1"/>
    <property type="molecule type" value="mRNA"/>
</dbReference>
<dbReference type="CCDS" id="CCDS25940.1"/>
<dbReference type="RefSeq" id="NP_038930.1">
    <property type="nucleotide sequence ID" value="NM_013902.4"/>
</dbReference>
<dbReference type="PDB" id="3KZ7">
    <property type="method" value="X-ray"/>
    <property type="resolution" value="1.95 A"/>
    <property type="chains" value="A=106-224"/>
</dbReference>
<dbReference type="PDBsum" id="3KZ7"/>
<dbReference type="SMR" id="Q62446"/>
<dbReference type="BioGRID" id="205966">
    <property type="interactions" value="13"/>
</dbReference>
<dbReference type="FunCoup" id="Q62446">
    <property type="interactions" value="1941"/>
</dbReference>
<dbReference type="IntAct" id="Q62446">
    <property type="interactions" value="2"/>
</dbReference>
<dbReference type="MINT" id="Q62446"/>
<dbReference type="STRING" id="10090.ENSMUSP00000021332"/>
<dbReference type="GlyGen" id="Q62446">
    <property type="glycosylation" value="1 site, 1 O-linked glycan (1 site)"/>
</dbReference>
<dbReference type="iPTMnet" id="Q62446"/>
<dbReference type="PhosphoSitePlus" id="Q62446"/>
<dbReference type="SwissPalm" id="Q62446"/>
<dbReference type="jPOST" id="Q62446"/>
<dbReference type="PaxDb" id="10090-ENSMUSP00000021332"/>
<dbReference type="ProteomicsDB" id="267478"/>
<dbReference type="Pumba" id="Q62446"/>
<dbReference type="Antibodypedia" id="56">
    <property type="antibodies" value="233 antibodies from 33 providers"/>
</dbReference>
<dbReference type="DNASU" id="30795"/>
<dbReference type="Ensembl" id="ENSMUST00000021332.10">
    <property type="protein sequence ID" value="ENSMUSP00000021332.9"/>
    <property type="gene ID" value="ENSMUSG00000020949.10"/>
</dbReference>
<dbReference type="GeneID" id="30795"/>
<dbReference type="KEGG" id="mmu:30795"/>
<dbReference type="UCSC" id="uc007nrb.1">
    <property type="organism name" value="mouse"/>
</dbReference>
<dbReference type="AGR" id="MGI:1353460"/>
<dbReference type="CTD" id="2287"/>
<dbReference type="MGI" id="MGI:1353460">
    <property type="gene designation" value="Fkbp3"/>
</dbReference>
<dbReference type="VEuPathDB" id="HostDB:ENSMUSG00000020949"/>
<dbReference type="eggNOG" id="KOG0544">
    <property type="taxonomic scope" value="Eukaryota"/>
</dbReference>
<dbReference type="GeneTree" id="ENSGT00940000154514"/>
<dbReference type="HOGENOM" id="CLU_013615_12_2_1"/>
<dbReference type="InParanoid" id="Q62446"/>
<dbReference type="OMA" id="IEPDWAY"/>
<dbReference type="OrthoDB" id="12561at9989"/>
<dbReference type="PhylomeDB" id="Q62446"/>
<dbReference type="TreeFam" id="TF105293"/>
<dbReference type="BioGRID-ORCS" id="30795">
    <property type="hits" value="4 hits in 78 CRISPR screens"/>
</dbReference>
<dbReference type="ChiTaRS" id="Fkbp3">
    <property type="organism name" value="mouse"/>
</dbReference>
<dbReference type="EvolutionaryTrace" id="Q62446"/>
<dbReference type="PRO" id="PR:Q62446"/>
<dbReference type="Proteomes" id="UP000000589">
    <property type="component" value="Chromosome 12"/>
</dbReference>
<dbReference type="RNAct" id="Q62446">
    <property type="molecule type" value="protein"/>
</dbReference>
<dbReference type="Bgee" id="ENSMUSG00000020949">
    <property type="expression patterns" value="Expressed in optic fissure and 289 other cell types or tissues"/>
</dbReference>
<dbReference type="ExpressionAtlas" id="Q62446">
    <property type="expression patterns" value="baseline and differential"/>
</dbReference>
<dbReference type="GO" id="GO:0005634">
    <property type="term" value="C:nucleus"/>
    <property type="evidence" value="ECO:0000314"/>
    <property type="project" value="MGI"/>
</dbReference>
<dbReference type="GO" id="GO:0003755">
    <property type="term" value="F:peptidyl-prolyl cis-trans isomerase activity"/>
    <property type="evidence" value="ECO:0007669"/>
    <property type="project" value="UniProtKB-KW"/>
</dbReference>
<dbReference type="CDD" id="cd21063">
    <property type="entry name" value="BTHB_FKBP25"/>
    <property type="match status" value="1"/>
</dbReference>
<dbReference type="FunFam" id="1.10.720.80:FF:000002">
    <property type="entry name" value="Peptidylprolyl isomerase"/>
    <property type="match status" value="1"/>
</dbReference>
<dbReference type="FunFam" id="3.10.50.40:FF:000023">
    <property type="entry name" value="Peptidylprolyl isomerase"/>
    <property type="match status" value="1"/>
</dbReference>
<dbReference type="Gene3D" id="1.10.720.80">
    <property type="match status" value="1"/>
</dbReference>
<dbReference type="Gene3D" id="3.10.50.40">
    <property type="match status" value="1"/>
</dbReference>
<dbReference type="InterPro" id="IPR043368">
    <property type="entry name" value="FKBP3"/>
</dbReference>
<dbReference type="InterPro" id="IPR041200">
    <property type="entry name" value="FKBP3_BTHB"/>
</dbReference>
<dbReference type="InterPro" id="IPR046357">
    <property type="entry name" value="PPIase_dom_sf"/>
</dbReference>
<dbReference type="InterPro" id="IPR001179">
    <property type="entry name" value="PPIase_FKBP_dom"/>
</dbReference>
<dbReference type="PANTHER" id="PTHR46493">
    <property type="entry name" value="PEPTIDYL-PROLYL CIS-TRANS ISOMERASE FKBP3"/>
    <property type="match status" value="1"/>
</dbReference>
<dbReference type="PANTHER" id="PTHR46493:SF1">
    <property type="entry name" value="PEPTIDYL-PROLYL CIS-TRANS ISOMERASE FKBP3"/>
    <property type="match status" value="1"/>
</dbReference>
<dbReference type="Pfam" id="PF18410">
    <property type="entry name" value="BTHB"/>
    <property type="match status" value="1"/>
</dbReference>
<dbReference type="Pfam" id="PF00254">
    <property type="entry name" value="FKBP_C"/>
    <property type="match status" value="1"/>
</dbReference>
<dbReference type="SUPFAM" id="SSF54534">
    <property type="entry name" value="FKBP-like"/>
    <property type="match status" value="1"/>
</dbReference>
<dbReference type="PROSITE" id="PS50059">
    <property type="entry name" value="FKBP_PPIASE"/>
    <property type="match status" value="1"/>
</dbReference>
<keyword id="KW-0002">3D-structure</keyword>
<keyword id="KW-0007">Acetylation</keyword>
<keyword id="KW-0903">Direct protein sequencing</keyword>
<keyword id="KW-0413">Isomerase</keyword>
<keyword id="KW-0539">Nucleus</keyword>
<keyword id="KW-0597">Phosphoprotein</keyword>
<keyword id="KW-1185">Reference proteome</keyword>
<keyword id="KW-0697">Rotamase</keyword>
<protein>
    <recommendedName>
        <fullName>Peptidyl-prolyl cis-trans isomerase FKBP3</fullName>
        <shortName>PPIase FKBP3</shortName>
        <ecNumber>5.2.1.8</ecNumber>
    </recommendedName>
    <alternativeName>
        <fullName>25 kDa FK506-binding protein</fullName>
        <shortName>25 kDa FKBP</shortName>
        <shortName>FKBP-25</shortName>
    </alternativeName>
    <alternativeName>
        <fullName>FK506-binding protein 3</fullName>
        <shortName>FKBP-3</shortName>
    </alternativeName>
    <alternativeName>
        <fullName>Immunophilin FKBP25</fullName>
    </alternativeName>
    <alternativeName>
        <fullName>Rapamycin-selective 25 kDa immunophilin</fullName>
    </alternativeName>
    <alternativeName>
        <fullName>Rotamase</fullName>
    </alternativeName>
</protein>
<evidence type="ECO:0000250" key="1"/>
<evidence type="ECO:0000250" key="2">
    <source>
        <dbReference type="UniProtKB" id="Q00688"/>
    </source>
</evidence>
<evidence type="ECO:0000255" key="3">
    <source>
        <dbReference type="PROSITE-ProRule" id="PRU00277"/>
    </source>
</evidence>
<evidence type="ECO:0000256" key="4">
    <source>
        <dbReference type="SAM" id="MobiDB-lite"/>
    </source>
</evidence>
<evidence type="ECO:0000305" key="5"/>
<evidence type="ECO:0007744" key="6">
    <source>
    </source>
</evidence>
<evidence type="ECO:0007829" key="7">
    <source>
        <dbReference type="PDB" id="3KZ7"/>
    </source>
</evidence>
<gene>
    <name type="primary">Fkbp3</name>
    <name type="synonym">Fkbp25</name>
</gene>
<comment type="function">
    <text evidence="1">FK506- and rapamycin-binding proteins (FKBPs) constitute a family of receptors for the two immunosuppressants which inhibit T-cell proliferation by arresting two distinct cytoplasmic signal transmission pathways. PPIases accelerate the folding of proteins (By similarity).</text>
</comment>
<comment type="catalytic activity">
    <reaction>
        <text>[protein]-peptidylproline (omega=180) = [protein]-peptidylproline (omega=0)</text>
        <dbReference type="Rhea" id="RHEA:16237"/>
        <dbReference type="Rhea" id="RHEA-COMP:10747"/>
        <dbReference type="Rhea" id="RHEA-COMP:10748"/>
        <dbReference type="ChEBI" id="CHEBI:83833"/>
        <dbReference type="ChEBI" id="CHEBI:83834"/>
        <dbReference type="EC" id="5.2.1.8"/>
    </reaction>
</comment>
<comment type="activity regulation">
    <text evidence="1">Inhibited preferentially by rapamycin over FK506.</text>
</comment>
<comment type="interaction">
    <interactant intactId="EBI-8313562">
        <id>Q62446</id>
    </interactant>
    <interactant intactId="EBI-389668">
        <id>Q00987</id>
        <label>MDM2</label>
    </interactant>
    <organismsDiffer>true</organismsDiffer>
    <experiments>4</experiments>
</comment>
<comment type="subcellular location">
    <subcellularLocation>
        <location evidence="1">Nucleus</location>
    </subcellularLocation>
</comment>
<comment type="similarity">
    <text evidence="5">Belongs to the FKBP-type PPIase family.</text>
</comment>
<proteinExistence type="evidence at protein level"/>